<accession>Q14BP6</accession>
<accession>Q3UPS2</accession>
<accession>Q8BYL7</accession>
<feature type="chain" id="PRO_0000306173" description="Leucine-rich repeat-containing protein 74B">
    <location>
        <begin position="1"/>
        <end position="391"/>
    </location>
</feature>
<feature type="repeat" description="LRR 1">
    <location>
        <begin position="106"/>
        <end position="126"/>
    </location>
</feature>
<feature type="repeat" description="LRR 2">
    <location>
        <begin position="134"/>
        <end position="154"/>
    </location>
</feature>
<feature type="repeat" description="LRR 3">
    <location>
        <begin position="162"/>
        <end position="182"/>
    </location>
</feature>
<feature type="repeat" description="LRR 4">
    <location>
        <begin position="190"/>
        <end position="211"/>
    </location>
</feature>
<feature type="repeat" description="LRR 5">
    <location>
        <begin position="218"/>
        <end position="239"/>
    </location>
</feature>
<feature type="repeat" description="LRR 6">
    <location>
        <begin position="246"/>
        <end position="259"/>
    </location>
</feature>
<feature type="repeat" description="LRR 7">
    <location>
        <begin position="274"/>
        <end position="294"/>
    </location>
</feature>
<feature type="repeat" description="LRR 8">
    <location>
        <begin position="302"/>
        <end position="323"/>
    </location>
</feature>
<feature type="repeat" description="LRR 9">
    <location>
        <begin position="332"/>
        <end position="354"/>
    </location>
</feature>
<feature type="region of interest" description="Disordered" evidence="1">
    <location>
        <begin position="1"/>
        <end position="38"/>
    </location>
</feature>
<feature type="region of interest" description="Disordered" evidence="1">
    <location>
        <begin position="371"/>
        <end position="391"/>
    </location>
</feature>
<feature type="compositionally biased region" description="Basic and acidic residues" evidence="1">
    <location>
        <begin position="28"/>
        <end position="38"/>
    </location>
</feature>
<feature type="compositionally biased region" description="Low complexity" evidence="1">
    <location>
        <begin position="374"/>
        <end position="391"/>
    </location>
</feature>
<feature type="splice variant" id="VSP_028428" description="In isoform 2." evidence="2">
    <location>
        <begin position="308"/>
        <end position="339"/>
    </location>
</feature>
<feature type="splice variant" id="VSP_028429" description="In isoform 3." evidence="2">
    <original>ISK</original>
    <variation>VCW</variation>
    <location>
        <begin position="308"/>
        <end position="310"/>
    </location>
</feature>
<feature type="splice variant" id="VSP_028430" description="In isoform 3." evidence="2">
    <location>
        <begin position="311"/>
        <end position="391"/>
    </location>
</feature>
<protein>
    <recommendedName>
        <fullName evidence="3">Leucine-rich repeat-containing protein 74B</fullName>
    </recommendedName>
</protein>
<proteinExistence type="evidence at transcript level"/>
<reference key="1">
    <citation type="journal article" date="2005" name="Science">
        <title>The transcriptional landscape of the mammalian genome.</title>
        <authorList>
            <person name="Carninci P."/>
            <person name="Kasukawa T."/>
            <person name="Katayama S."/>
            <person name="Gough J."/>
            <person name="Frith M.C."/>
            <person name="Maeda N."/>
            <person name="Oyama R."/>
            <person name="Ravasi T."/>
            <person name="Lenhard B."/>
            <person name="Wells C."/>
            <person name="Kodzius R."/>
            <person name="Shimokawa K."/>
            <person name="Bajic V.B."/>
            <person name="Brenner S.E."/>
            <person name="Batalov S."/>
            <person name="Forrest A.R."/>
            <person name="Zavolan M."/>
            <person name="Davis M.J."/>
            <person name="Wilming L.G."/>
            <person name="Aidinis V."/>
            <person name="Allen J.E."/>
            <person name="Ambesi-Impiombato A."/>
            <person name="Apweiler R."/>
            <person name="Aturaliya R.N."/>
            <person name="Bailey T.L."/>
            <person name="Bansal M."/>
            <person name="Baxter L."/>
            <person name="Beisel K.W."/>
            <person name="Bersano T."/>
            <person name="Bono H."/>
            <person name="Chalk A.M."/>
            <person name="Chiu K.P."/>
            <person name="Choudhary V."/>
            <person name="Christoffels A."/>
            <person name="Clutterbuck D.R."/>
            <person name="Crowe M.L."/>
            <person name="Dalla E."/>
            <person name="Dalrymple B.P."/>
            <person name="de Bono B."/>
            <person name="Della Gatta G."/>
            <person name="di Bernardo D."/>
            <person name="Down T."/>
            <person name="Engstrom P."/>
            <person name="Fagiolini M."/>
            <person name="Faulkner G."/>
            <person name="Fletcher C.F."/>
            <person name="Fukushima T."/>
            <person name="Furuno M."/>
            <person name="Futaki S."/>
            <person name="Gariboldi M."/>
            <person name="Georgii-Hemming P."/>
            <person name="Gingeras T.R."/>
            <person name="Gojobori T."/>
            <person name="Green R.E."/>
            <person name="Gustincich S."/>
            <person name="Harbers M."/>
            <person name="Hayashi Y."/>
            <person name="Hensch T.K."/>
            <person name="Hirokawa N."/>
            <person name="Hill D."/>
            <person name="Huminiecki L."/>
            <person name="Iacono M."/>
            <person name="Ikeo K."/>
            <person name="Iwama A."/>
            <person name="Ishikawa T."/>
            <person name="Jakt M."/>
            <person name="Kanapin A."/>
            <person name="Katoh M."/>
            <person name="Kawasawa Y."/>
            <person name="Kelso J."/>
            <person name="Kitamura H."/>
            <person name="Kitano H."/>
            <person name="Kollias G."/>
            <person name="Krishnan S.P."/>
            <person name="Kruger A."/>
            <person name="Kummerfeld S.K."/>
            <person name="Kurochkin I.V."/>
            <person name="Lareau L.F."/>
            <person name="Lazarevic D."/>
            <person name="Lipovich L."/>
            <person name="Liu J."/>
            <person name="Liuni S."/>
            <person name="McWilliam S."/>
            <person name="Madan Babu M."/>
            <person name="Madera M."/>
            <person name="Marchionni L."/>
            <person name="Matsuda H."/>
            <person name="Matsuzawa S."/>
            <person name="Miki H."/>
            <person name="Mignone F."/>
            <person name="Miyake S."/>
            <person name="Morris K."/>
            <person name="Mottagui-Tabar S."/>
            <person name="Mulder N."/>
            <person name="Nakano N."/>
            <person name="Nakauchi H."/>
            <person name="Ng P."/>
            <person name="Nilsson R."/>
            <person name="Nishiguchi S."/>
            <person name="Nishikawa S."/>
            <person name="Nori F."/>
            <person name="Ohara O."/>
            <person name="Okazaki Y."/>
            <person name="Orlando V."/>
            <person name="Pang K.C."/>
            <person name="Pavan W.J."/>
            <person name="Pavesi G."/>
            <person name="Pesole G."/>
            <person name="Petrovsky N."/>
            <person name="Piazza S."/>
            <person name="Reed J."/>
            <person name="Reid J.F."/>
            <person name="Ring B.Z."/>
            <person name="Ringwald M."/>
            <person name="Rost B."/>
            <person name="Ruan Y."/>
            <person name="Salzberg S.L."/>
            <person name="Sandelin A."/>
            <person name="Schneider C."/>
            <person name="Schoenbach C."/>
            <person name="Sekiguchi K."/>
            <person name="Semple C.A."/>
            <person name="Seno S."/>
            <person name="Sessa L."/>
            <person name="Sheng Y."/>
            <person name="Shibata Y."/>
            <person name="Shimada H."/>
            <person name="Shimada K."/>
            <person name="Silva D."/>
            <person name="Sinclair B."/>
            <person name="Sperling S."/>
            <person name="Stupka E."/>
            <person name="Sugiura K."/>
            <person name="Sultana R."/>
            <person name="Takenaka Y."/>
            <person name="Taki K."/>
            <person name="Tammoja K."/>
            <person name="Tan S.L."/>
            <person name="Tang S."/>
            <person name="Taylor M.S."/>
            <person name="Tegner J."/>
            <person name="Teichmann S.A."/>
            <person name="Ueda H.R."/>
            <person name="van Nimwegen E."/>
            <person name="Verardo R."/>
            <person name="Wei C.L."/>
            <person name="Yagi K."/>
            <person name="Yamanishi H."/>
            <person name="Zabarovsky E."/>
            <person name="Zhu S."/>
            <person name="Zimmer A."/>
            <person name="Hide W."/>
            <person name="Bult C."/>
            <person name="Grimmond S.M."/>
            <person name="Teasdale R.D."/>
            <person name="Liu E.T."/>
            <person name="Brusic V."/>
            <person name="Quackenbush J."/>
            <person name="Wahlestedt C."/>
            <person name="Mattick J.S."/>
            <person name="Hume D.A."/>
            <person name="Kai C."/>
            <person name="Sasaki D."/>
            <person name="Tomaru Y."/>
            <person name="Fukuda S."/>
            <person name="Kanamori-Katayama M."/>
            <person name="Suzuki M."/>
            <person name="Aoki J."/>
            <person name="Arakawa T."/>
            <person name="Iida J."/>
            <person name="Imamura K."/>
            <person name="Itoh M."/>
            <person name="Kato T."/>
            <person name="Kawaji H."/>
            <person name="Kawagashira N."/>
            <person name="Kawashima T."/>
            <person name="Kojima M."/>
            <person name="Kondo S."/>
            <person name="Konno H."/>
            <person name="Nakano K."/>
            <person name="Ninomiya N."/>
            <person name="Nishio T."/>
            <person name="Okada M."/>
            <person name="Plessy C."/>
            <person name="Shibata K."/>
            <person name="Shiraki T."/>
            <person name="Suzuki S."/>
            <person name="Tagami M."/>
            <person name="Waki K."/>
            <person name="Watahiki A."/>
            <person name="Okamura-Oho Y."/>
            <person name="Suzuki H."/>
            <person name="Kawai J."/>
            <person name="Hayashizaki Y."/>
        </authorList>
    </citation>
    <scope>NUCLEOTIDE SEQUENCE [LARGE SCALE MRNA] (ISOFORMS 2 AND 3)</scope>
    <source>
        <strain>C57BL/6J</strain>
        <tissue>Head</tissue>
        <tissue>Hypothalamus</tissue>
        <tissue>Oviduct</tissue>
    </source>
</reference>
<reference key="2">
    <citation type="journal article" date="2004" name="Genome Res.">
        <title>The status, quality, and expansion of the NIH full-length cDNA project: the Mammalian Gene Collection (MGC).</title>
        <authorList>
            <consortium name="The MGC Project Team"/>
        </authorList>
    </citation>
    <scope>NUCLEOTIDE SEQUENCE [LARGE SCALE MRNA] (ISOFORM 1)</scope>
</reference>
<sequence>MKGPCEVQKNEDQEGEAAATGPQAETLEAERSWTADSHSALEAEGTHGLGERVMATLYLKSCRANSVVPVSCLLRQEGASELNLRHRGLGPQGVRALASVLTSNPYIKRLDLRDNGLCGAGAEALADVLRKNSIISDVDLSENQIGAAGLQAICTALALNPTVEKMQLQGNRLEEQAAQHLAALLLHHRGLKSLDLSYNQLNDLAGEILGPAVAENTGLTELNLSWNHLRGLGATAFARGLEANIFLKVLDISHNGFGDSGASAIGDALRVNNVLEELNMRNNRISVSGALKLGLGLQVNQTLRILIISKNPIRSDGCVGLLKSVRNNKSSALELLDVSDIQVSRECEDLASSMSEILPGLCIKRYTSRRKDWPQASTPSQPASAPSDSGL</sequence>
<organism>
    <name type="scientific">Mus musculus</name>
    <name type="common">Mouse</name>
    <dbReference type="NCBI Taxonomy" id="10090"/>
    <lineage>
        <taxon>Eukaryota</taxon>
        <taxon>Metazoa</taxon>
        <taxon>Chordata</taxon>
        <taxon>Craniata</taxon>
        <taxon>Vertebrata</taxon>
        <taxon>Euteleostomi</taxon>
        <taxon>Mammalia</taxon>
        <taxon>Eutheria</taxon>
        <taxon>Euarchontoglires</taxon>
        <taxon>Glires</taxon>
        <taxon>Rodentia</taxon>
        <taxon>Myomorpha</taxon>
        <taxon>Muroidea</taxon>
        <taxon>Muridae</taxon>
        <taxon>Murinae</taxon>
        <taxon>Mus</taxon>
        <taxon>Mus</taxon>
    </lineage>
</organism>
<keyword id="KW-0025">Alternative splicing</keyword>
<keyword id="KW-0433">Leucine-rich repeat</keyword>
<keyword id="KW-1185">Reference proteome</keyword>
<keyword id="KW-0677">Repeat</keyword>
<comment type="alternative products">
    <event type="alternative splicing"/>
    <isoform>
        <id>Q14BP6-1</id>
        <name>1</name>
        <sequence type="displayed"/>
    </isoform>
    <isoform>
        <id>Q14BP6-2</id>
        <name>2</name>
        <sequence type="described" ref="VSP_028428"/>
    </isoform>
    <isoform>
        <id>Q14BP6-3</id>
        <name>3</name>
        <sequence type="described" ref="VSP_028429 VSP_028430"/>
    </isoform>
</comment>
<dbReference type="EMBL" id="AK039092">
    <property type="protein sequence ID" value="BAC30235.1"/>
    <property type="molecule type" value="mRNA"/>
</dbReference>
<dbReference type="EMBL" id="AK132588">
    <property type="protein sequence ID" value="BAE21248.1"/>
    <property type="molecule type" value="mRNA"/>
</dbReference>
<dbReference type="EMBL" id="AK143245">
    <property type="protein sequence ID" value="BAE25323.1"/>
    <property type="molecule type" value="mRNA"/>
</dbReference>
<dbReference type="EMBL" id="AK161226">
    <property type="protein sequence ID" value="BAE36250.1"/>
    <property type="molecule type" value="mRNA"/>
</dbReference>
<dbReference type="EMBL" id="BC115678">
    <property type="protein sequence ID" value="AAI15679.1"/>
    <property type="molecule type" value="mRNA"/>
</dbReference>
<dbReference type="EMBL" id="BC115679">
    <property type="protein sequence ID" value="AAI15680.1"/>
    <property type="molecule type" value="mRNA"/>
</dbReference>
<dbReference type="CCDS" id="CCDS28006.2">
    <molecule id="Q14BP6-1"/>
</dbReference>
<dbReference type="CCDS" id="CCDS49777.1">
    <molecule id="Q14BP6-2"/>
</dbReference>
<dbReference type="RefSeq" id="NP_001138907.1">
    <molecule id="Q14BP6-2"/>
    <property type="nucleotide sequence ID" value="NM_001145435.1"/>
</dbReference>
<dbReference type="RefSeq" id="NP_083329.2">
    <molecule id="Q14BP6-1"/>
    <property type="nucleotide sequence ID" value="NM_029053.3"/>
</dbReference>
<dbReference type="SMR" id="Q14BP6"/>
<dbReference type="STRING" id="10090.ENSMUSP00000097699"/>
<dbReference type="GlyGen" id="Q14BP6">
    <property type="glycosylation" value="1 site"/>
</dbReference>
<dbReference type="iPTMnet" id="Q14BP6"/>
<dbReference type="PhosphoSitePlus" id="Q14BP6"/>
<dbReference type="PaxDb" id="10090-ENSMUSP00000097699"/>
<dbReference type="ProteomicsDB" id="252494">
    <molecule id="Q14BP6-1"/>
</dbReference>
<dbReference type="ProteomicsDB" id="252495">
    <molecule id="Q14BP6-2"/>
</dbReference>
<dbReference type="ProteomicsDB" id="252496">
    <molecule id="Q14BP6-3"/>
</dbReference>
<dbReference type="Antibodypedia" id="62520">
    <property type="antibodies" value="24 antibodies from 8 providers"/>
</dbReference>
<dbReference type="Ensembl" id="ENSMUST00000023442.13">
    <molecule id="Q14BP6-2"/>
    <property type="protein sequence ID" value="ENSMUSP00000023442.7"/>
    <property type="gene ID" value="ENSMUSG00000022759.16"/>
</dbReference>
<dbReference type="Ensembl" id="ENSMUST00000100123.10">
    <molecule id="Q14BP6-1"/>
    <property type="protein sequence ID" value="ENSMUSP00000097699.4"/>
    <property type="gene ID" value="ENSMUSG00000022759.16"/>
</dbReference>
<dbReference type="Ensembl" id="ENSMUST00000232637.2">
    <molecule id="Q14BP6-3"/>
    <property type="protein sequence ID" value="ENSMUSP00000155867.2"/>
    <property type="gene ID" value="ENSMUSG00000022759.16"/>
</dbReference>
<dbReference type="GeneID" id="74685"/>
<dbReference type="KEGG" id="mmu:74685"/>
<dbReference type="UCSC" id="uc007yle.2">
    <molecule id="Q14BP6-1"/>
    <property type="organism name" value="mouse"/>
</dbReference>
<dbReference type="UCSC" id="uc007ylf.2">
    <molecule id="Q14BP6-2"/>
    <property type="organism name" value="mouse"/>
</dbReference>
<dbReference type="AGR" id="MGI:1921935"/>
<dbReference type="CTD" id="400891"/>
<dbReference type="MGI" id="MGI:1921935">
    <property type="gene designation" value="Lrrc74b"/>
</dbReference>
<dbReference type="VEuPathDB" id="HostDB:ENSMUSG00000022759"/>
<dbReference type="eggNOG" id="KOG4308">
    <property type="taxonomic scope" value="Eukaryota"/>
</dbReference>
<dbReference type="GeneTree" id="ENSGT00940000154297"/>
<dbReference type="HOGENOM" id="CLU_017147_0_0_1"/>
<dbReference type="InParanoid" id="Q14BP6"/>
<dbReference type="OMA" id="QGPEANW"/>
<dbReference type="OrthoDB" id="76105at2759"/>
<dbReference type="PhylomeDB" id="Q14BP6"/>
<dbReference type="TreeFam" id="TF329403"/>
<dbReference type="BioGRID-ORCS" id="74685">
    <property type="hits" value="2 hits in 76 CRISPR screens"/>
</dbReference>
<dbReference type="ChiTaRS" id="Lrrc74b">
    <property type="organism name" value="mouse"/>
</dbReference>
<dbReference type="PRO" id="PR:Q14BP6"/>
<dbReference type="Proteomes" id="UP000000589">
    <property type="component" value="Chromosome 16"/>
</dbReference>
<dbReference type="RNAct" id="Q14BP6">
    <property type="molecule type" value="protein"/>
</dbReference>
<dbReference type="Bgee" id="ENSMUSG00000022759">
    <property type="expression patterns" value="Expressed in knee joint and 99 other cell types or tissues"/>
</dbReference>
<dbReference type="Gene3D" id="3.80.10.10">
    <property type="entry name" value="Ribonuclease Inhibitor"/>
    <property type="match status" value="1"/>
</dbReference>
<dbReference type="InterPro" id="IPR001611">
    <property type="entry name" value="Leu-rich_rpt"/>
</dbReference>
<dbReference type="InterPro" id="IPR052394">
    <property type="entry name" value="LRR-containing"/>
</dbReference>
<dbReference type="InterPro" id="IPR032675">
    <property type="entry name" value="LRR_dom_sf"/>
</dbReference>
<dbReference type="PANTHER" id="PTHR24114">
    <property type="entry name" value="LEUCINE RICH REPEAT FAMILY PROTEIN"/>
    <property type="match status" value="1"/>
</dbReference>
<dbReference type="PANTHER" id="PTHR24114:SF37">
    <property type="entry name" value="LEUCINE-RICH REPEAT-CONTAINING PROTEIN 74B"/>
    <property type="match status" value="1"/>
</dbReference>
<dbReference type="Pfam" id="PF13516">
    <property type="entry name" value="LRR_6"/>
    <property type="match status" value="7"/>
</dbReference>
<dbReference type="SMART" id="SM00368">
    <property type="entry name" value="LRR_RI"/>
    <property type="match status" value="9"/>
</dbReference>
<dbReference type="SUPFAM" id="SSF52047">
    <property type="entry name" value="RNI-like"/>
    <property type="match status" value="1"/>
</dbReference>
<dbReference type="PROSITE" id="PS51450">
    <property type="entry name" value="LRR"/>
    <property type="match status" value="4"/>
</dbReference>
<name>LR74B_MOUSE</name>
<gene>
    <name evidence="3" type="primary">Lrrc74b</name>
</gene>
<evidence type="ECO:0000256" key="1">
    <source>
        <dbReference type="SAM" id="MobiDB-lite"/>
    </source>
</evidence>
<evidence type="ECO:0000303" key="2">
    <source>
    </source>
</evidence>
<evidence type="ECO:0000312" key="3">
    <source>
        <dbReference type="MGI" id="MGI:1921935"/>
    </source>
</evidence>